<accession>Q96242</accession>
<accession>P93720</accession>
<accession>Q9ZR51</accession>
<organism>
    <name type="scientific">Arabidopsis thaliana</name>
    <name type="common">Mouse-ear cress</name>
    <dbReference type="NCBI Taxonomy" id="3702"/>
    <lineage>
        <taxon>Eukaryota</taxon>
        <taxon>Viridiplantae</taxon>
        <taxon>Streptophyta</taxon>
        <taxon>Embryophyta</taxon>
        <taxon>Tracheophyta</taxon>
        <taxon>Spermatophyta</taxon>
        <taxon>Magnoliopsida</taxon>
        <taxon>eudicotyledons</taxon>
        <taxon>Gunneridae</taxon>
        <taxon>Pentapetalae</taxon>
        <taxon>rosids</taxon>
        <taxon>malvids</taxon>
        <taxon>Brassicales</taxon>
        <taxon>Brassicaceae</taxon>
        <taxon>Camelineae</taxon>
        <taxon>Arabidopsis</taxon>
    </lineage>
</organism>
<keyword id="KW-0002">3D-structure</keyword>
<keyword id="KW-0150">Chloroplast</keyword>
<keyword id="KW-0275">Fatty acid biosynthesis</keyword>
<keyword id="KW-0276">Fatty acid metabolism</keyword>
<keyword id="KW-0349">Heme</keyword>
<keyword id="KW-0408">Iron</keyword>
<keyword id="KW-0444">Lipid biosynthesis</keyword>
<keyword id="KW-0443">Lipid metabolism</keyword>
<keyword id="KW-0456">Lyase</keyword>
<keyword id="KW-0479">Metal-binding</keyword>
<keyword id="KW-0925">Oxylipin biosynthesis</keyword>
<keyword id="KW-0934">Plastid</keyword>
<keyword id="KW-1185">Reference proteome</keyword>
<keyword id="KW-0809">Transit peptide</keyword>
<proteinExistence type="evidence at protein level"/>
<protein>
    <recommendedName>
        <fullName evidence="6">Allene oxide synthase, chloroplastic</fullName>
        <ecNumber evidence="5">4.2.1.92</ecNumber>
    </recommendedName>
    <alternativeName>
        <fullName>Cytochrome P450 74A</fullName>
    </alternativeName>
    <alternativeName>
        <fullName evidence="6">Hydroperoxide dehydratase</fullName>
    </alternativeName>
</protein>
<sequence>MASISTPFPISLHPKTVRSKPLKFRVLTRPIKASGSETPDLTVATRTGSKDLPIRNIPGNYGLPIVGPIKDRWDYFYDQGAEEFFKSRIRKYNSTVYRVNMPPGAFIAENPQVVALLDGKSFPVLFDVDKVEKKDLFTGTYMPSTELTGGYRILSYLDPSEPKHEKLKNLLFFLLKSSRNRIFPEFQATYSELFDSLEKELSLKGKADFGGSSDGTAFNFLARAFYGTNPADTKLKADAPGLITKWVLFNLHPLLSIGLPRVIEEPLIHTFSLPPALVKSDYQRLYEFFLESAGEILVEADKLGISREEATHNLLFATCFNTWGGMKILFPNMVKRIGRAGHQVHNRLAEEIRSVIKSNGGELTMGAIEKMELTKSVVYECLRFEPPVTAQYGRAKKDLVIESHDAAFKVKAGEMLYGYQPLATRDPKIFDRADEFVPERFVGEEGEKLLRHVLWSNGPETETPTVGNKQCAGKDFVVLVARLFVIEIFRRYDSFDIEVGTSPLGSSVNFSSLRKASF</sequence>
<reference key="1">
    <citation type="journal article" date="1996" name="Plant Mol. Biol.">
        <title>Cloning, molecular and functional characterization of Arabidopsis thaliana allene oxide synthase (CYP 74), the first enzyme of the octadecanoid pathway to jasmonates.</title>
        <authorList>
            <person name="Laudert D."/>
            <person name="Pfannschmidt U."/>
            <person name="Lottspeich F."/>
            <person name="Hollanderczytko H."/>
            <person name="Weiler E.W."/>
        </authorList>
    </citation>
    <scope>NUCLEOTIDE SEQUENCE [MRNA]</scope>
    <scope>FUNCTION</scope>
    <scope>CATALYTIC ACTIVITY</scope>
    <scope>INDUCTION BY WOUNDING</scope>
    <source>
        <strain>cv. Columbia</strain>
        <tissue>Leaf</tissue>
    </source>
</reference>
<reference key="2">
    <citation type="journal article" date="1999" name="Planta">
        <title>Structure and regulation of the Arabidopsis thaliana allene oxide synthase gene.</title>
        <authorList>
            <person name="Kubigsteltig I."/>
            <person name="Laudert D."/>
            <person name="Weiler E.W."/>
        </authorList>
    </citation>
    <scope>NUCLEOTIDE SEQUENCE [GENOMIC DNA]</scope>
</reference>
<reference key="3">
    <citation type="online journal article" date="1999" name="Plant Gene Register">
        <title>Sequence of an allene oxide synthase cDNA from Arabidopsis thaliana.</title>
        <authorList>
            <person name="Staswick P.E."/>
        </authorList>
        <locator>PGR99-130</locator>
    </citation>
    <scope>NUCLEOTIDE SEQUENCE [MRNA]</scope>
    <source>
        <strain>cv. Columbia</strain>
    </source>
</reference>
<reference key="4">
    <citation type="journal article" date="1997" name="DNA Res.">
        <title>Structural analysis of Arabidopsis thaliana chromosome 5. III. Sequence features of the regions of 1,191,918 bp covered by seventeen physically assigned P1 clones.</title>
        <authorList>
            <person name="Nakamura Y."/>
            <person name="Sato S."/>
            <person name="Kaneko T."/>
            <person name="Kotani H."/>
            <person name="Asamizu E."/>
            <person name="Miyajima N."/>
            <person name="Tabata S."/>
        </authorList>
    </citation>
    <scope>NUCLEOTIDE SEQUENCE [LARGE SCALE GENOMIC DNA]</scope>
    <source>
        <strain>cv. Columbia</strain>
    </source>
</reference>
<reference key="5">
    <citation type="journal article" date="2017" name="Plant J.">
        <title>Araport11: a complete reannotation of the Arabidopsis thaliana reference genome.</title>
        <authorList>
            <person name="Cheng C.Y."/>
            <person name="Krishnakumar V."/>
            <person name="Chan A.P."/>
            <person name="Thibaud-Nissen F."/>
            <person name="Schobel S."/>
            <person name="Town C.D."/>
        </authorList>
    </citation>
    <scope>GENOME REANNOTATION</scope>
    <source>
        <strain>cv. Columbia</strain>
    </source>
</reference>
<reference key="6">
    <citation type="journal article" date="2003" name="Science">
        <title>Empirical analysis of transcriptional activity in the Arabidopsis genome.</title>
        <authorList>
            <person name="Yamada K."/>
            <person name="Lim J."/>
            <person name="Dale J.M."/>
            <person name="Chen H."/>
            <person name="Shinn P."/>
            <person name="Palm C.J."/>
            <person name="Southwick A.M."/>
            <person name="Wu H.C."/>
            <person name="Kim C.J."/>
            <person name="Nguyen M."/>
            <person name="Pham P.K."/>
            <person name="Cheuk R.F."/>
            <person name="Karlin-Newmann G."/>
            <person name="Liu S.X."/>
            <person name="Lam B."/>
            <person name="Sakano H."/>
            <person name="Wu T."/>
            <person name="Yu G."/>
            <person name="Miranda M."/>
            <person name="Quach H.L."/>
            <person name="Tripp M."/>
            <person name="Chang C.H."/>
            <person name="Lee J.M."/>
            <person name="Toriumi M.J."/>
            <person name="Chan M.M."/>
            <person name="Tang C.C."/>
            <person name="Onodera C.S."/>
            <person name="Deng J.M."/>
            <person name="Akiyama K."/>
            <person name="Ansari Y."/>
            <person name="Arakawa T."/>
            <person name="Banh J."/>
            <person name="Banno F."/>
            <person name="Bowser L."/>
            <person name="Brooks S.Y."/>
            <person name="Carninci P."/>
            <person name="Chao Q."/>
            <person name="Choy N."/>
            <person name="Enju A."/>
            <person name="Goldsmith A.D."/>
            <person name="Gurjal M."/>
            <person name="Hansen N.F."/>
            <person name="Hayashizaki Y."/>
            <person name="Johnson-Hopson C."/>
            <person name="Hsuan V.W."/>
            <person name="Iida K."/>
            <person name="Karnes M."/>
            <person name="Khan S."/>
            <person name="Koesema E."/>
            <person name="Ishida J."/>
            <person name="Jiang P.X."/>
            <person name="Jones T."/>
            <person name="Kawai J."/>
            <person name="Kamiya A."/>
            <person name="Meyers C."/>
            <person name="Nakajima M."/>
            <person name="Narusaka M."/>
            <person name="Seki M."/>
            <person name="Sakurai T."/>
            <person name="Satou M."/>
            <person name="Tamse R."/>
            <person name="Vaysberg M."/>
            <person name="Wallender E.K."/>
            <person name="Wong C."/>
            <person name="Yamamura Y."/>
            <person name="Yuan S."/>
            <person name="Shinozaki K."/>
            <person name="Davis R.W."/>
            <person name="Theologis A."/>
            <person name="Ecker J.R."/>
        </authorList>
    </citation>
    <scope>NUCLEOTIDE SEQUENCE [LARGE SCALE MRNA]</scope>
    <source>
        <strain>cv. Columbia</strain>
    </source>
</reference>
<reference key="7">
    <citation type="journal article" date="2003" name="Mol. Cell. Proteomics">
        <title>Proteomics of the chloroplast envelope membranes from Arabidopsis thaliana.</title>
        <authorList>
            <person name="Ferro M."/>
            <person name="Salvi D."/>
            <person name="Brugiere S."/>
            <person name="Miras S."/>
            <person name="Kowalski S."/>
            <person name="Louwagie M."/>
            <person name="Garin J."/>
            <person name="Joyard J."/>
            <person name="Rolland N."/>
        </authorList>
    </citation>
    <scope>CLEAVAGE OF TRANSIT PEPTIDE AFTER ALA-33</scope>
    <scope>IDENTIFICATION BY MASS SPECTROMETRY</scope>
    <scope>SUBCELLULAR LOCATION [LARGE SCALE ANALYSIS]</scope>
    <source>
        <strain>cv. Wassilewskija</strain>
    </source>
</reference>
<reference key="8">
    <citation type="journal article" date="2006" name="J. Biol. Chem.">
        <title>Tocopherol cyclase (VTE1) localization and vitamin E accumulation in chloroplast plastoglobule lipoprotein particles.</title>
        <authorList>
            <person name="Vidi P.-A."/>
            <person name="Kanwischer M."/>
            <person name="Baginsky S."/>
            <person name="Austin J.R."/>
            <person name="Csucs G."/>
            <person name="Doermann P."/>
            <person name="Kessler F."/>
            <person name="Brehelin C."/>
        </authorList>
    </citation>
    <scope>SUBCELLULAR LOCATION</scope>
    <source>
        <strain>cv. Col-2</strain>
    </source>
</reference>
<reference key="9">
    <citation type="journal article" date="2006" name="Plant Physiol.">
        <title>Protein profiling of plastoglobules in chloroplasts and chromoplasts. A surprising site for differential accumulation of metabolic enzymes.</title>
        <authorList>
            <person name="Ytterberg A.J."/>
            <person name="Peltier J.-B."/>
            <person name="van Wijk K.J."/>
        </authorList>
    </citation>
    <scope>IDENTIFICATION BY MASS SPECTROMETRY</scope>
    <scope>SUBCELLULAR LOCATION [LARGE SCALE ANALYSIS]</scope>
    <source>
        <strain>cv. Columbia</strain>
    </source>
</reference>
<reference evidence="10 11 12 13 14 15 16" key="10">
    <citation type="journal article" date="2008" name="Nature">
        <title>Structural insights into the evolutionary paths of oxylipin biosynthetic enzymes.</title>
        <authorList>
            <person name="Lee D.-S."/>
            <person name="Nioche P."/>
            <person name="Hamberg M."/>
            <person name="Raman C.S."/>
        </authorList>
    </citation>
    <scope>X-RAY CRYSTALLOGRAPHY (1.55 ANGSTROMS) OF 34-518 OF WILD-TYPE AND MUTANT LEU-137 IN COMPLEXES WITH HEME B AND SUBSTRATE ANALOGS (9Z,11E,13S)-13-HYDROXYOCTADECA-9,11-DIENOATE AND (9Z,11E,13S,15Z)-13-HYDROXYOCTADECA-9,11,15-TRIENOATE</scope>
    <scope>MUTAGENESIS OF PHE-137; SER-155 AND ASN-321</scope>
</reference>
<comment type="function">
    <text evidence="5">Cytochrome P450 enzyme involved in the biosynthesis of oxylipin jasmonates, important phytohormones acting as growth regulators and signaling molecules for plant defense. Functions as an allene oxide synthase that converts hydroperoxy fatty acids to unstable allene epoxides. Catalyzes the dehydration of 13-HPOTE ((13S)-hydroperoxy-(9Z,11E,15Z)-octadecatrienoate), as well as 13-HPODE ((13S)-hydroperoxy-(9Z,11E)-octadecadienoate).</text>
</comment>
<comment type="catalytic activity">
    <reaction evidence="5">
        <text>(13S)-hydroperoxy-(9Z,11E,15Z)-octadecatrienoate = (9Z,13S,15Z)-12,13-epoxyoctadeca-9,11,15-trienoate + H2O</text>
        <dbReference type="Rhea" id="RHEA:25074"/>
        <dbReference type="ChEBI" id="CHEBI:15377"/>
        <dbReference type="ChEBI" id="CHEBI:36438"/>
        <dbReference type="ChEBI" id="CHEBI:58757"/>
        <dbReference type="EC" id="4.2.1.92"/>
    </reaction>
    <physiologicalReaction direction="left-to-right" evidence="9">
        <dbReference type="Rhea" id="RHEA:25075"/>
    </physiologicalReaction>
</comment>
<comment type="catalytic activity">
    <reaction evidence="5">
        <text>(13S)-hydroperoxy-(9Z,11E)-octadecadienoate = (9Z,13S)-12,13-epoxyoctadeca-9,11-dienoate + H2O</text>
        <dbReference type="Rhea" id="RHEA:84075"/>
        <dbReference type="ChEBI" id="CHEBI:15377"/>
        <dbReference type="ChEBI" id="CHEBI:57465"/>
        <dbReference type="ChEBI" id="CHEBI:57466"/>
    </reaction>
    <physiologicalReaction direction="left-to-right" evidence="9">
        <dbReference type="Rhea" id="RHEA:84076"/>
    </physiologicalReaction>
</comment>
<comment type="cofactor">
    <cofactor evidence="4">
        <name>heme b</name>
        <dbReference type="ChEBI" id="CHEBI:60344"/>
    </cofactor>
</comment>
<comment type="pathway">
    <text evidence="7">Lipid metabolism; oxylipin biosynthesis.</text>
</comment>
<comment type="subcellular location">
    <subcellularLocation>
        <location evidence="1 2 3">Plastid</location>
        <location evidence="1 2 3">Chloroplast</location>
        <location evidence="1 2 3">Plastoglobule</location>
    </subcellularLocation>
</comment>
<comment type="induction">
    <text evidence="5">By wounding.</text>
</comment>
<comment type="similarity">
    <text evidence="7">Belongs to the cytochrome P450 family.</text>
</comment>
<dbReference type="EC" id="4.2.1.92" evidence="5"/>
<dbReference type="EMBL" id="X92510">
    <property type="protein sequence ID" value="CAA63266.1"/>
    <property type="molecule type" value="mRNA"/>
</dbReference>
<dbReference type="EMBL" id="Y12636">
    <property type="protein sequence ID" value="CAA73184.1"/>
    <property type="molecule type" value="Genomic_DNA"/>
</dbReference>
<dbReference type="EMBL" id="AF172727">
    <property type="protein sequence ID" value="AAF00225.1"/>
    <property type="molecule type" value="mRNA"/>
</dbReference>
<dbReference type="EMBL" id="AB007647">
    <property type="protein sequence ID" value="BAB10621.1"/>
    <property type="molecule type" value="Genomic_DNA"/>
</dbReference>
<dbReference type="EMBL" id="CP002688">
    <property type="protein sequence ID" value="AED94842.1"/>
    <property type="molecule type" value="Genomic_DNA"/>
</dbReference>
<dbReference type="EMBL" id="AY062828">
    <property type="protein sequence ID" value="AAL32906.1"/>
    <property type="molecule type" value="mRNA"/>
</dbReference>
<dbReference type="EMBL" id="AY065089">
    <property type="protein sequence ID" value="AAL38265.1"/>
    <property type="molecule type" value="mRNA"/>
</dbReference>
<dbReference type="EMBL" id="AY128733">
    <property type="protein sequence ID" value="AAM91133.1"/>
    <property type="molecule type" value="mRNA"/>
</dbReference>
<dbReference type="EMBL" id="AY128755">
    <property type="protein sequence ID" value="AAM91155.1"/>
    <property type="molecule type" value="mRNA"/>
</dbReference>
<dbReference type="RefSeq" id="NP_199079.1">
    <property type="nucleotide sequence ID" value="NM_123629.4"/>
</dbReference>
<dbReference type="PDB" id="2RCH">
    <property type="method" value="X-ray"/>
    <property type="resolution" value="1.85 A"/>
    <property type="chains" value="A/B=34-518"/>
</dbReference>
<dbReference type="PDB" id="2RCL">
    <property type="method" value="X-ray"/>
    <property type="resolution" value="2.41 A"/>
    <property type="chains" value="A/B=34-518"/>
</dbReference>
<dbReference type="PDB" id="2RCM">
    <property type="method" value="X-ray"/>
    <property type="resolution" value="1.73 A"/>
    <property type="chains" value="A/B=34-518"/>
</dbReference>
<dbReference type="PDB" id="3CLI">
    <property type="method" value="X-ray"/>
    <property type="resolution" value="1.80 A"/>
    <property type="chains" value="A/B=34-518"/>
</dbReference>
<dbReference type="PDB" id="3DSI">
    <property type="method" value="X-ray"/>
    <property type="resolution" value="1.60 A"/>
    <property type="chains" value="A/B=34-518"/>
</dbReference>
<dbReference type="PDB" id="3DSJ">
    <property type="method" value="X-ray"/>
    <property type="resolution" value="1.60 A"/>
    <property type="chains" value="A/B=34-518"/>
</dbReference>
<dbReference type="PDB" id="3DSK">
    <property type="method" value="X-ray"/>
    <property type="resolution" value="1.55 A"/>
    <property type="chains" value="A/B=34-518"/>
</dbReference>
<dbReference type="PDBsum" id="2RCH"/>
<dbReference type="PDBsum" id="2RCL"/>
<dbReference type="PDBsum" id="2RCM"/>
<dbReference type="PDBsum" id="3CLI"/>
<dbReference type="PDBsum" id="3DSI"/>
<dbReference type="PDBsum" id="3DSJ"/>
<dbReference type="PDBsum" id="3DSK"/>
<dbReference type="SMR" id="Q96242"/>
<dbReference type="BioGRID" id="19523">
    <property type="interactions" value="2"/>
</dbReference>
<dbReference type="FunCoup" id="Q96242">
    <property type="interactions" value="467"/>
</dbReference>
<dbReference type="IntAct" id="Q96242">
    <property type="interactions" value="3"/>
</dbReference>
<dbReference type="STRING" id="3702.Q96242"/>
<dbReference type="ChEMBL" id="CHEMBL2268010"/>
<dbReference type="iPTMnet" id="Q96242"/>
<dbReference type="PaxDb" id="3702-AT5G42650.1"/>
<dbReference type="ProteomicsDB" id="222761"/>
<dbReference type="EnsemblPlants" id="AT5G42650.1">
    <property type="protein sequence ID" value="AT5G42650.1"/>
    <property type="gene ID" value="AT5G42650"/>
</dbReference>
<dbReference type="GeneID" id="834273"/>
<dbReference type="Gramene" id="AT5G42650.1">
    <property type="protein sequence ID" value="AT5G42650.1"/>
    <property type="gene ID" value="AT5G42650"/>
</dbReference>
<dbReference type="KEGG" id="ath:AT5G42650"/>
<dbReference type="Araport" id="AT5G42650"/>
<dbReference type="TAIR" id="AT5G42650">
    <property type="gene designation" value="AOS"/>
</dbReference>
<dbReference type="eggNOG" id="ENOG502QQNS">
    <property type="taxonomic scope" value="Eukaryota"/>
</dbReference>
<dbReference type="HOGENOM" id="CLU_045757_0_0_1"/>
<dbReference type="InParanoid" id="Q96242"/>
<dbReference type="OMA" id="DFGHYND"/>
<dbReference type="PhylomeDB" id="Q96242"/>
<dbReference type="BioCyc" id="ARA:MONOMER-1582"/>
<dbReference type="BioCyc" id="MetaCyc:MONOMER-1582"/>
<dbReference type="BRENDA" id="4.2.1.92">
    <property type="organism ID" value="399"/>
</dbReference>
<dbReference type="SABIO-RK" id="Q96242"/>
<dbReference type="UniPathway" id="UPA00382"/>
<dbReference type="EvolutionaryTrace" id="Q96242"/>
<dbReference type="PRO" id="PR:Q96242"/>
<dbReference type="Proteomes" id="UP000006548">
    <property type="component" value="Chromosome 5"/>
</dbReference>
<dbReference type="ExpressionAtlas" id="Q96242">
    <property type="expression patterns" value="baseline and differential"/>
</dbReference>
<dbReference type="GO" id="GO:0009507">
    <property type="term" value="C:chloroplast"/>
    <property type="evidence" value="ECO:0007005"/>
    <property type="project" value="TAIR"/>
</dbReference>
<dbReference type="GO" id="GO:0009941">
    <property type="term" value="C:chloroplast envelope"/>
    <property type="evidence" value="ECO:0007005"/>
    <property type="project" value="TAIR"/>
</dbReference>
<dbReference type="GO" id="GO:0009534">
    <property type="term" value="C:chloroplast thylakoid"/>
    <property type="evidence" value="ECO:0007005"/>
    <property type="project" value="TAIR"/>
</dbReference>
<dbReference type="GO" id="GO:0009535">
    <property type="term" value="C:chloroplast thylakoid membrane"/>
    <property type="evidence" value="ECO:0007005"/>
    <property type="project" value="TAIR"/>
</dbReference>
<dbReference type="GO" id="GO:0005739">
    <property type="term" value="C:mitochondrion"/>
    <property type="evidence" value="ECO:0007005"/>
    <property type="project" value="TAIR"/>
</dbReference>
<dbReference type="GO" id="GO:0009536">
    <property type="term" value="C:plastid"/>
    <property type="evidence" value="ECO:0007005"/>
    <property type="project" value="TAIR"/>
</dbReference>
<dbReference type="GO" id="GO:0010287">
    <property type="term" value="C:plastoglobule"/>
    <property type="evidence" value="ECO:0007005"/>
    <property type="project" value="TAIR"/>
</dbReference>
<dbReference type="GO" id="GO:0009579">
    <property type="term" value="C:thylakoid"/>
    <property type="evidence" value="ECO:0007005"/>
    <property type="project" value="TAIR"/>
</dbReference>
<dbReference type="GO" id="GO:0009978">
    <property type="term" value="F:allene oxide synthase activity"/>
    <property type="evidence" value="ECO:0000314"/>
    <property type="project" value="TAIR"/>
</dbReference>
<dbReference type="GO" id="GO:0020037">
    <property type="term" value="F:heme binding"/>
    <property type="evidence" value="ECO:0007669"/>
    <property type="project" value="InterPro"/>
</dbReference>
<dbReference type="GO" id="GO:0005506">
    <property type="term" value="F:iron ion binding"/>
    <property type="evidence" value="ECO:0007669"/>
    <property type="project" value="InterPro"/>
</dbReference>
<dbReference type="GO" id="GO:0004497">
    <property type="term" value="F:monooxygenase activity"/>
    <property type="evidence" value="ECO:0007669"/>
    <property type="project" value="InterPro"/>
</dbReference>
<dbReference type="GO" id="GO:0016705">
    <property type="term" value="F:oxidoreductase activity, acting on paired donors, with incorporation or reduction of molecular oxygen"/>
    <property type="evidence" value="ECO:0007669"/>
    <property type="project" value="InterPro"/>
</dbReference>
<dbReference type="GO" id="GO:0019825">
    <property type="term" value="F:oxygen binding"/>
    <property type="evidence" value="ECO:0000250"/>
    <property type="project" value="TAIR"/>
</dbReference>
<dbReference type="GO" id="GO:0006952">
    <property type="term" value="P:defense response"/>
    <property type="evidence" value="ECO:0000304"/>
    <property type="project" value="TAIR"/>
</dbReference>
<dbReference type="GO" id="GO:0050832">
    <property type="term" value="P:defense response to fungus"/>
    <property type="evidence" value="ECO:0000315"/>
    <property type="project" value="TAIR"/>
</dbReference>
<dbReference type="GO" id="GO:0019373">
    <property type="term" value="P:epoxygenase P450 pathway"/>
    <property type="evidence" value="ECO:0000250"/>
    <property type="project" value="TAIR"/>
</dbReference>
<dbReference type="GO" id="GO:0009695">
    <property type="term" value="P:jasmonic acid biosynthetic process"/>
    <property type="evidence" value="ECO:0000314"/>
    <property type="project" value="TAIR"/>
</dbReference>
<dbReference type="GO" id="GO:0031408">
    <property type="term" value="P:oxylipin biosynthetic process"/>
    <property type="evidence" value="ECO:0007669"/>
    <property type="project" value="UniProtKB-UniPathway"/>
</dbReference>
<dbReference type="GO" id="GO:0031407">
    <property type="term" value="P:oxylipin metabolic process"/>
    <property type="evidence" value="ECO:0000314"/>
    <property type="project" value="TAIR"/>
</dbReference>
<dbReference type="GO" id="GO:0009620">
    <property type="term" value="P:response to fungus"/>
    <property type="evidence" value="ECO:0000270"/>
    <property type="project" value="TAIR"/>
</dbReference>
<dbReference type="GO" id="GO:0009753">
    <property type="term" value="P:response to jasmonic acid"/>
    <property type="evidence" value="ECO:0000315"/>
    <property type="project" value="TAIR"/>
</dbReference>
<dbReference type="GO" id="GO:0009611">
    <property type="term" value="P:response to wounding"/>
    <property type="evidence" value="ECO:0000315"/>
    <property type="project" value="TAIR"/>
</dbReference>
<dbReference type="CDD" id="cd11071">
    <property type="entry name" value="CYP74"/>
    <property type="match status" value="1"/>
</dbReference>
<dbReference type="FunFam" id="1.10.630.10:FF:000024">
    <property type="entry name" value="Allene oxide synthase, chloroplastic"/>
    <property type="match status" value="1"/>
</dbReference>
<dbReference type="Gene3D" id="1.10.630.10">
    <property type="entry name" value="Cytochrome P450"/>
    <property type="match status" value="1"/>
</dbReference>
<dbReference type="InterPro" id="IPR001128">
    <property type="entry name" value="Cyt_P450"/>
</dbReference>
<dbReference type="InterPro" id="IPR036396">
    <property type="entry name" value="Cyt_P450_sf"/>
</dbReference>
<dbReference type="PANTHER" id="PTHR24286:SF255">
    <property type="entry name" value="ALLENE OXIDE SYNTHASE, CHLOROPLASTIC"/>
    <property type="match status" value="1"/>
</dbReference>
<dbReference type="PANTHER" id="PTHR24286">
    <property type="entry name" value="CYTOCHROME P450 26"/>
    <property type="match status" value="1"/>
</dbReference>
<dbReference type="Pfam" id="PF00067">
    <property type="entry name" value="p450"/>
    <property type="match status" value="1"/>
</dbReference>
<dbReference type="SUPFAM" id="SSF48264">
    <property type="entry name" value="Cytochrome P450"/>
    <property type="match status" value="1"/>
</dbReference>
<feature type="transit peptide" description="Chloroplast" evidence="1">
    <location>
        <begin position="1"/>
        <end position="33"/>
    </location>
</feature>
<feature type="chain" id="PRO_0000003625" description="Allene oxide synthase, chloroplastic">
    <location>
        <begin position="34"/>
        <end position="518"/>
    </location>
</feature>
<feature type="binding site" evidence="4 10 11 12 13 14 15 16">
    <location>
        <position position="133"/>
    </location>
    <ligand>
        <name>heme b</name>
        <dbReference type="ChEBI" id="CHEBI:60344"/>
    </ligand>
</feature>
<feature type="binding site" evidence="4 10 11 14 15 16">
    <location>
        <position position="164"/>
    </location>
    <ligand>
        <name>heme b</name>
        <dbReference type="ChEBI" id="CHEBI:60344"/>
    </ligand>
</feature>
<feature type="binding site" evidence="4 10 11 12 13 14 15 16">
    <location>
        <position position="168"/>
    </location>
    <ligand>
        <name>heme b</name>
        <dbReference type="ChEBI" id="CHEBI:60344"/>
    </ligand>
</feature>
<feature type="binding site" evidence="8 10 15">
    <location>
        <position position="321"/>
    </location>
    <ligand>
        <name>(13S)-hydroperoxy-(9Z,11E)-octadecadienoate</name>
        <dbReference type="ChEBI" id="CHEBI:57466"/>
    </ligand>
</feature>
<feature type="binding site" evidence="8 14">
    <location>
        <position position="321"/>
    </location>
    <ligand>
        <name>(13S)-hydroperoxy-(9Z,11E,15Z)-octadecatrienoate</name>
        <dbReference type="ChEBI" id="CHEBI:58757"/>
    </ligand>
</feature>
<feature type="binding site" evidence="8 10 15">
    <location>
        <position position="389"/>
    </location>
    <ligand>
        <name>(13S)-hydroperoxy-(9Z,11E)-octadecadienoate</name>
        <dbReference type="ChEBI" id="CHEBI:57466"/>
    </ligand>
</feature>
<feature type="binding site" evidence="8 14">
    <location>
        <position position="389"/>
    </location>
    <ligand>
        <name>(13S)-hydroperoxy-(9Z,11E,15Z)-octadecatrienoate</name>
        <dbReference type="ChEBI" id="CHEBI:58757"/>
    </ligand>
</feature>
<feature type="binding site" evidence="4 10 11 12 13 14 15 16">
    <location>
        <position position="469"/>
    </location>
    <ligand>
        <name>heme b</name>
        <dbReference type="ChEBI" id="CHEBI:60344"/>
    </ligand>
</feature>
<feature type="binding site" description="axial binding residue" evidence="4 10 11 12 13 14 15 16">
    <location>
        <position position="471"/>
    </location>
    <ligand>
        <name>heme b</name>
        <dbReference type="ChEBI" id="CHEBI:60344"/>
    </ligand>
    <ligandPart>
        <name>Fe</name>
        <dbReference type="ChEBI" id="CHEBI:18248"/>
    </ligandPart>
</feature>
<feature type="mutagenesis site" description="Impairs allene oxide synthase (AOS) activity, but confers some hydroperoxide lyase (HPL) activity. Confers strong hydroperoxide lyase (HPL) activity; when associated with A-155." evidence="4">
    <original>F</original>
    <variation>L</variation>
    <location>
        <position position="137"/>
    </location>
</feature>
<feature type="mutagenesis site" description="Confers strong HPL activity; when associated with L-137." evidence="4">
    <original>S</original>
    <variation>A</variation>
    <location>
        <position position="155"/>
    </location>
</feature>
<feature type="mutagenesis site" description="Abolished allene oxide synthase activity." evidence="4">
    <original>N</original>
    <variation>Q</variation>
    <location>
        <position position="321"/>
    </location>
</feature>
<feature type="sequence conflict" description="In Ref. 1; CAA63266." evidence="7" ref="1">
    <original>LSLKGKADFGGSSDGTAFNFLARAFYGTNPADT</original>
    <variation>AFPLRESGFRRFQRRNRLLFLGSSFLRDESRRY</variation>
    <location>
        <begin position="201"/>
        <end position="233"/>
    </location>
</feature>
<feature type="sequence conflict" description="In Ref. 1; CAA63266." evidence="7" ref="1">
    <original>FLESA</original>
    <variation>LRIR</variation>
    <location>
        <begin position="289"/>
        <end position="293"/>
    </location>
</feature>
<feature type="sequence conflict" description="In Ref. 1; CAA63266." evidence="7" ref="1">
    <original>C</original>
    <variation>S</variation>
    <location>
        <position position="319"/>
    </location>
</feature>
<feature type="sequence conflict" description="In Ref. 1; CAA63266." evidence="7" ref="1">
    <original>RA</original>
    <variation>PG</variation>
    <location>
        <begin position="339"/>
        <end position="340"/>
    </location>
</feature>
<feature type="helix" evidence="17">
    <location>
        <begin position="66"/>
        <end position="76"/>
    </location>
</feature>
<feature type="helix" evidence="17">
    <location>
        <begin position="81"/>
        <end position="92"/>
    </location>
</feature>
<feature type="strand" evidence="17">
    <location>
        <begin position="95"/>
        <end position="100"/>
    </location>
</feature>
<feature type="turn" evidence="17">
    <location>
        <begin position="105"/>
        <end position="107"/>
    </location>
</feature>
<feature type="strand" evidence="17">
    <location>
        <begin position="112"/>
        <end position="116"/>
    </location>
</feature>
<feature type="turn" evidence="17">
    <location>
        <begin position="119"/>
        <end position="121"/>
    </location>
</feature>
<feature type="helix" evidence="17">
    <location>
        <begin position="122"/>
        <end position="126"/>
    </location>
</feature>
<feature type="turn" evidence="17">
    <location>
        <begin position="128"/>
        <end position="130"/>
    </location>
</feature>
<feature type="strand" evidence="17">
    <location>
        <begin position="139"/>
        <end position="141"/>
    </location>
</feature>
<feature type="helix" evidence="17">
    <location>
        <begin position="145"/>
        <end position="148"/>
    </location>
</feature>
<feature type="helix" evidence="17">
    <location>
        <begin position="154"/>
        <end position="156"/>
    </location>
</feature>
<feature type="helix" evidence="17">
    <location>
        <begin position="162"/>
        <end position="177"/>
    </location>
</feature>
<feature type="turn" evidence="17">
    <location>
        <begin position="178"/>
        <end position="181"/>
    </location>
</feature>
<feature type="helix" evidence="17">
    <location>
        <begin position="182"/>
        <end position="204"/>
    </location>
</feature>
<feature type="strand" evidence="17">
    <location>
        <begin position="205"/>
        <end position="209"/>
    </location>
</feature>
<feature type="helix" evidence="17">
    <location>
        <begin position="210"/>
        <end position="226"/>
    </location>
</feature>
<feature type="helix" evidence="17">
    <location>
        <begin position="230"/>
        <end position="232"/>
    </location>
</feature>
<feature type="turn" evidence="17">
    <location>
        <begin position="234"/>
        <end position="237"/>
    </location>
</feature>
<feature type="helix" evidence="17">
    <location>
        <begin position="239"/>
        <end position="251"/>
    </location>
</feature>
<feature type="helix" evidence="17">
    <location>
        <begin position="252"/>
        <end position="254"/>
    </location>
</feature>
<feature type="helix" evidence="17">
    <location>
        <begin position="261"/>
        <end position="268"/>
    </location>
</feature>
<feature type="strand" evidence="17">
    <location>
        <begin position="269"/>
        <end position="271"/>
    </location>
</feature>
<feature type="helix" evidence="17">
    <location>
        <begin position="275"/>
        <end position="278"/>
    </location>
</feature>
<feature type="helix" evidence="17">
    <location>
        <begin position="279"/>
        <end position="292"/>
    </location>
</feature>
<feature type="helix" evidence="17">
    <location>
        <begin position="294"/>
        <end position="302"/>
    </location>
</feature>
<feature type="helix" evidence="17">
    <location>
        <begin position="307"/>
        <end position="319"/>
    </location>
</feature>
<feature type="helix" evidence="17">
    <location>
        <begin position="322"/>
        <end position="340"/>
    </location>
</feature>
<feature type="helix" evidence="17">
    <location>
        <begin position="342"/>
        <end position="358"/>
    </location>
</feature>
<feature type="turn" evidence="17">
    <location>
        <begin position="359"/>
        <end position="361"/>
    </location>
</feature>
<feature type="helix" evidence="17">
    <location>
        <begin position="365"/>
        <end position="369"/>
    </location>
</feature>
<feature type="helix" evidence="17">
    <location>
        <begin position="372"/>
        <end position="384"/>
    </location>
</feature>
<feature type="strand" evidence="17">
    <location>
        <begin position="390"/>
        <end position="397"/>
    </location>
</feature>
<feature type="strand" evidence="17">
    <location>
        <begin position="399"/>
        <end position="402"/>
    </location>
</feature>
<feature type="strand" evidence="17">
    <location>
        <begin position="407"/>
        <end position="410"/>
    </location>
</feature>
<feature type="strand" evidence="17">
    <location>
        <begin position="415"/>
        <end position="419"/>
    </location>
</feature>
<feature type="helix" evidence="17">
    <location>
        <begin position="420"/>
        <end position="424"/>
    </location>
</feature>
<feature type="turn" evidence="17">
    <location>
        <begin position="427"/>
        <end position="429"/>
    </location>
</feature>
<feature type="turn" evidence="17">
    <location>
        <begin position="431"/>
        <end position="434"/>
    </location>
</feature>
<feature type="turn" evidence="17">
    <location>
        <begin position="438"/>
        <end position="441"/>
    </location>
</feature>
<feature type="helix" evidence="17">
    <location>
        <begin position="443"/>
        <end position="448"/>
    </location>
</feature>
<feature type="helix" evidence="17">
    <location>
        <begin position="449"/>
        <end position="452"/>
    </location>
</feature>
<feature type="helix" evidence="17">
    <location>
        <begin position="474"/>
        <end position="491"/>
    </location>
</feature>
<feature type="strand" evidence="17">
    <location>
        <begin position="492"/>
        <end position="501"/>
    </location>
</feature>
<feature type="strand" evidence="17">
    <location>
        <begin position="503"/>
        <end position="515"/>
    </location>
</feature>
<name>CP74A_ARATH</name>
<gene>
    <name type="primary">CYP74A</name>
    <name type="synonym">AOS</name>
    <name type="ordered locus">At5g42650</name>
    <name type="ORF">MJB21.2</name>
</gene>
<evidence type="ECO:0000269" key="1">
    <source>
    </source>
</evidence>
<evidence type="ECO:0000269" key="2">
    <source>
    </source>
</evidence>
<evidence type="ECO:0000269" key="3">
    <source>
    </source>
</evidence>
<evidence type="ECO:0000269" key="4">
    <source>
    </source>
</evidence>
<evidence type="ECO:0000269" key="5">
    <source>
    </source>
</evidence>
<evidence type="ECO:0000303" key="6">
    <source>
    </source>
</evidence>
<evidence type="ECO:0000305" key="7"/>
<evidence type="ECO:0000305" key="8">
    <source>
    </source>
</evidence>
<evidence type="ECO:0000305" key="9">
    <source>
    </source>
</evidence>
<evidence type="ECO:0007744" key="10">
    <source>
        <dbReference type="PDB" id="2RCH"/>
    </source>
</evidence>
<evidence type="ECO:0007744" key="11">
    <source>
        <dbReference type="PDB" id="2RCL"/>
    </source>
</evidence>
<evidence type="ECO:0007744" key="12">
    <source>
        <dbReference type="PDB" id="2RCM"/>
    </source>
</evidence>
<evidence type="ECO:0007744" key="13">
    <source>
        <dbReference type="PDB" id="3CLI"/>
    </source>
</evidence>
<evidence type="ECO:0007744" key="14">
    <source>
        <dbReference type="PDB" id="3DSI"/>
    </source>
</evidence>
<evidence type="ECO:0007744" key="15">
    <source>
        <dbReference type="PDB" id="3DSJ"/>
    </source>
</evidence>
<evidence type="ECO:0007744" key="16">
    <source>
        <dbReference type="PDB" id="3DSK"/>
    </source>
</evidence>
<evidence type="ECO:0007829" key="17">
    <source>
        <dbReference type="PDB" id="3DSK"/>
    </source>
</evidence>